<proteinExistence type="inferred from homology"/>
<protein>
    <recommendedName>
        <fullName evidence="1">ATP-dependent Clp protease ATP-binding subunit ClpX</fullName>
    </recommendedName>
</protein>
<evidence type="ECO:0000255" key="1">
    <source>
        <dbReference type="HAMAP-Rule" id="MF_00175"/>
    </source>
</evidence>
<evidence type="ECO:0000255" key="2">
    <source>
        <dbReference type="PROSITE-ProRule" id="PRU01250"/>
    </source>
</evidence>
<gene>
    <name evidence="1" type="primary">clpX</name>
    <name type="ordered locus">Amet_1068</name>
</gene>
<dbReference type="EMBL" id="CP000724">
    <property type="protein sequence ID" value="ABR47280.1"/>
    <property type="molecule type" value="Genomic_DNA"/>
</dbReference>
<dbReference type="RefSeq" id="WP_012062322.1">
    <property type="nucleotide sequence ID" value="NC_009633.1"/>
</dbReference>
<dbReference type="SMR" id="A6TM62"/>
<dbReference type="STRING" id="293826.Amet_1068"/>
<dbReference type="KEGG" id="amt:Amet_1068"/>
<dbReference type="eggNOG" id="COG1219">
    <property type="taxonomic scope" value="Bacteria"/>
</dbReference>
<dbReference type="HOGENOM" id="CLU_014218_8_2_9"/>
<dbReference type="OrthoDB" id="9804062at2"/>
<dbReference type="Proteomes" id="UP000001572">
    <property type="component" value="Chromosome"/>
</dbReference>
<dbReference type="GO" id="GO:0009376">
    <property type="term" value="C:HslUV protease complex"/>
    <property type="evidence" value="ECO:0007669"/>
    <property type="project" value="TreeGrafter"/>
</dbReference>
<dbReference type="GO" id="GO:0005524">
    <property type="term" value="F:ATP binding"/>
    <property type="evidence" value="ECO:0007669"/>
    <property type="project" value="UniProtKB-UniRule"/>
</dbReference>
<dbReference type="GO" id="GO:0016887">
    <property type="term" value="F:ATP hydrolysis activity"/>
    <property type="evidence" value="ECO:0007669"/>
    <property type="project" value="InterPro"/>
</dbReference>
<dbReference type="GO" id="GO:0140662">
    <property type="term" value="F:ATP-dependent protein folding chaperone"/>
    <property type="evidence" value="ECO:0007669"/>
    <property type="project" value="InterPro"/>
</dbReference>
<dbReference type="GO" id="GO:0046983">
    <property type="term" value="F:protein dimerization activity"/>
    <property type="evidence" value="ECO:0007669"/>
    <property type="project" value="InterPro"/>
</dbReference>
<dbReference type="GO" id="GO:0051082">
    <property type="term" value="F:unfolded protein binding"/>
    <property type="evidence" value="ECO:0007669"/>
    <property type="project" value="UniProtKB-UniRule"/>
</dbReference>
<dbReference type="GO" id="GO:0008270">
    <property type="term" value="F:zinc ion binding"/>
    <property type="evidence" value="ECO:0007669"/>
    <property type="project" value="InterPro"/>
</dbReference>
<dbReference type="GO" id="GO:0051301">
    <property type="term" value="P:cell division"/>
    <property type="evidence" value="ECO:0007669"/>
    <property type="project" value="TreeGrafter"/>
</dbReference>
<dbReference type="GO" id="GO:0051603">
    <property type="term" value="P:proteolysis involved in protein catabolic process"/>
    <property type="evidence" value="ECO:0007669"/>
    <property type="project" value="TreeGrafter"/>
</dbReference>
<dbReference type="CDD" id="cd19497">
    <property type="entry name" value="RecA-like_ClpX"/>
    <property type="match status" value="1"/>
</dbReference>
<dbReference type="FunFam" id="1.10.8.60:FF:000002">
    <property type="entry name" value="ATP-dependent Clp protease ATP-binding subunit ClpX"/>
    <property type="match status" value="1"/>
</dbReference>
<dbReference type="FunFam" id="3.40.50.300:FF:000005">
    <property type="entry name" value="ATP-dependent Clp protease ATP-binding subunit ClpX"/>
    <property type="match status" value="1"/>
</dbReference>
<dbReference type="Gene3D" id="1.10.8.60">
    <property type="match status" value="1"/>
</dbReference>
<dbReference type="Gene3D" id="6.20.220.10">
    <property type="entry name" value="ClpX chaperone, C4-type zinc finger domain"/>
    <property type="match status" value="1"/>
</dbReference>
<dbReference type="Gene3D" id="3.40.50.300">
    <property type="entry name" value="P-loop containing nucleotide triphosphate hydrolases"/>
    <property type="match status" value="1"/>
</dbReference>
<dbReference type="HAMAP" id="MF_00175">
    <property type="entry name" value="ClpX"/>
    <property type="match status" value="1"/>
</dbReference>
<dbReference type="InterPro" id="IPR003593">
    <property type="entry name" value="AAA+_ATPase"/>
</dbReference>
<dbReference type="InterPro" id="IPR050052">
    <property type="entry name" value="ATP-dep_Clp_protease_ClpX"/>
</dbReference>
<dbReference type="InterPro" id="IPR003959">
    <property type="entry name" value="ATPase_AAA_core"/>
</dbReference>
<dbReference type="InterPro" id="IPR019489">
    <property type="entry name" value="Clp_ATPase_C"/>
</dbReference>
<dbReference type="InterPro" id="IPR004487">
    <property type="entry name" value="Clp_protease_ATP-bd_su_ClpX"/>
</dbReference>
<dbReference type="InterPro" id="IPR046425">
    <property type="entry name" value="ClpX_bact"/>
</dbReference>
<dbReference type="InterPro" id="IPR027417">
    <property type="entry name" value="P-loop_NTPase"/>
</dbReference>
<dbReference type="InterPro" id="IPR010603">
    <property type="entry name" value="Znf_CppX_C4"/>
</dbReference>
<dbReference type="InterPro" id="IPR038366">
    <property type="entry name" value="Znf_CppX_C4_sf"/>
</dbReference>
<dbReference type="NCBIfam" id="TIGR00382">
    <property type="entry name" value="clpX"/>
    <property type="match status" value="1"/>
</dbReference>
<dbReference type="NCBIfam" id="NF003745">
    <property type="entry name" value="PRK05342.1"/>
    <property type="match status" value="1"/>
</dbReference>
<dbReference type="PANTHER" id="PTHR48102:SF7">
    <property type="entry name" value="ATP-DEPENDENT CLP PROTEASE ATP-BINDING SUBUNIT CLPX-LIKE, MITOCHONDRIAL"/>
    <property type="match status" value="1"/>
</dbReference>
<dbReference type="PANTHER" id="PTHR48102">
    <property type="entry name" value="ATP-DEPENDENT CLP PROTEASE ATP-BINDING SUBUNIT CLPX-LIKE, MITOCHONDRIAL-RELATED"/>
    <property type="match status" value="1"/>
</dbReference>
<dbReference type="Pfam" id="PF07724">
    <property type="entry name" value="AAA_2"/>
    <property type="match status" value="1"/>
</dbReference>
<dbReference type="Pfam" id="PF10431">
    <property type="entry name" value="ClpB_D2-small"/>
    <property type="match status" value="1"/>
</dbReference>
<dbReference type="Pfam" id="PF06689">
    <property type="entry name" value="zf-C4_ClpX"/>
    <property type="match status" value="1"/>
</dbReference>
<dbReference type="SMART" id="SM00382">
    <property type="entry name" value="AAA"/>
    <property type="match status" value="1"/>
</dbReference>
<dbReference type="SMART" id="SM01086">
    <property type="entry name" value="ClpB_D2-small"/>
    <property type="match status" value="1"/>
</dbReference>
<dbReference type="SMART" id="SM00994">
    <property type="entry name" value="zf-C4_ClpX"/>
    <property type="match status" value="1"/>
</dbReference>
<dbReference type="SUPFAM" id="SSF57716">
    <property type="entry name" value="Glucocorticoid receptor-like (DNA-binding domain)"/>
    <property type="match status" value="1"/>
</dbReference>
<dbReference type="SUPFAM" id="SSF52540">
    <property type="entry name" value="P-loop containing nucleoside triphosphate hydrolases"/>
    <property type="match status" value="1"/>
</dbReference>
<dbReference type="PROSITE" id="PS51902">
    <property type="entry name" value="CLPX_ZB"/>
    <property type="match status" value="1"/>
</dbReference>
<reference key="1">
    <citation type="journal article" date="2016" name="Genome Announc.">
        <title>Complete genome sequence of Alkaliphilus metalliredigens strain QYMF, an alkaliphilic and metal-reducing bacterium isolated from borax-contaminated leachate ponds.</title>
        <authorList>
            <person name="Hwang C."/>
            <person name="Copeland A."/>
            <person name="Lucas S."/>
            <person name="Lapidus A."/>
            <person name="Barry K."/>
            <person name="Detter J.C."/>
            <person name="Glavina Del Rio T."/>
            <person name="Hammon N."/>
            <person name="Israni S."/>
            <person name="Dalin E."/>
            <person name="Tice H."/>
            <person name="Pitluck S."/>
            <person name="Chertkov O."/>
            <person name="Brettin T."/>
            <person name="Bruce D."/>
            <person name="Han C."/>
            <person name="Schmutz J."/>
            <person name="Larimer F."/>
            <person name="Land M.L."/>
            <person name="Hauser L."/>
            <person name="Kyrpides N."/>
            <person name="Mikhailova N."/>
            <person name="Ye Q."/>
            <person name="Zhou J."/>
            <person name="Richardson P."/>
            <person name="Fields M.W."/>
        </authorList>
    </citation>
    <scope>NUCLEOTIDE SEQUENCE [LARGE SCALE GENOMIC DNA]</scope>
    <source>
        <strain>QYMF</strain>
    </source>
</reference>
<sequence length="420" mass="46451">MSRFEEKKQLKCSFCGKSQDQVRRLIAGPNVYICDECIELCQEIIQEEFEENVEMDLVDLPKPKEIKDILNGYVIGQEKAKKALAVAVYNHYKRINTDTKTDDVELQKSNIMMLGPTGSGKTLLAQTLAKILNVPFAIADATSLTEAGYVGEDVENILLKLIQAADYDIEKAEKGIIYIDEIDKVARKSENPSITRDVSGEGVQQALLKILEGTVASVPPQGGRKHPHQEFIQIDTTNILFICGGAFDGIEKLIQKRTGKTSMGFGADVKSKVVKDIGGLLKQIQPEDLLKFGLIPEFVGRLPVIVTLDQLDEAALIEILTEPKNALVKQYKKLFEIDGVNVEFEGEALKLIAEKAIERKTGARGLRGIVEGLMMDIMYDVPSRDDIEKVIVTKDTVVNASLPTIILKDVKKDDSEETAS</sequence>
<name>CLPX_ALKMQ</name>
<organism>
    <name type="scientific">Alkaliphilus metalliredigens (strain QYMF)</name>
    <dbReference type="NCBI Taxonomy" id="293826"/>
    <lineage>
        <taxon>Bacteria</taxon>
        <taxon>Bacillati</taxon>
        <taxon>Bacillota</taxon>
        <taxon>Clostridia</taxon>
        <taxon>Peptostreptococcales</taxon>
        <taxon>Natronincolaceae</taxon>
        <taxon>Alkaliphilus</taxon>
    </lineage>
</organism>
<accession>A6TM62</accession>
<keyword id="KW-0067">ATP-binding</keyword>
<keyword id="KW-0143">Chaperone</keyword>
<keyword id="KW-0479">Metal-binding</keyword>
<keyword id="KW-0547">Nucleotide-binding</keyword>
<keyword id="KW-1185">Reference proteome</keyword>
<keyword id="KW-0862">Zinc</keyword>
<comment type="function">
    <text evidence="1">ATP-dependent specificity component of the Clp protease. It directs the protease to specific substrates. Can perform chaperone functions in the absence of ClpP.</text>
</comment>
<comment type="subunit">
    <text evidence="1">Component of the ClpX-ClpP complex. Forms a hexameric ring that, in the presence of ATP, binds to fourteen ClpP subunits assembled into a disk-like structure with a central cavity, resembling the structure of eukaryotic proteasomes.</text>
</comment>
<comment type="similarity">
    <text evidence="1">Belongs to the ClpX chaperone family.</text>
</comment>
<feature type="chain" id="PRO_1000097920" description="ATP-dependent Clp protease ATP-binding subunit ClpX">
    <location>
        <begin position="1"/>
        <end position="420"/>
    </location>
</feature>
<feature type="domain" description="ClpX-type ZB" evidence="2">
    <location>
        <begin position="1"/>
        <end position="53"/>
    </location>
</feature>
<feature type="binding site" evidence="2">
    <location>
        <position position="12"/>
    </location>
    <ligand>
        <name>Zn(2+)</name>
        <dbReference type="ChEBI" id="CHEBI:29105"/>
    </ligand>
</feature>
<feature type="binding site" evidence="2">
    <location>
        <position position="15"/>
    </location>
    <ligand>
        <name>Zn(2+)</name>
        <dbReference type="ChEBI" id="CHEBI:29105"/>
    </ligand>
</feature>
<feature type="binding site" evidence="2">
    <location>
        <position position="34"/>
    </location>
    <ligand>
        <name>Zn(2+)</name>
        <dbReference type="ChEBI" id="CHEBI:29105"/>
    </ligand>
</feature>
<feature type="binding site" evidence="2">
    <location>
        <position position="37"/>
    </location>
    <ligand>
        <name>Zn(2+)</name>
        <dbReference type="ChEBI" id="CHEBI:29105"/>
    </ligand>
</feature>
<feature type="binding site" evidence="1">
    <location>
        <begin position="116"/>
        <end position="123"/>
    </location>
    <ligand>
        <name>ATP</name>
        <dbReference type="ChEBI" id="CHEBI:30616"/>
    </ligand>
</feature>